<evidence type="ECO:0000250" key="1"/>
<evidence type="ECO:0000256" key="2">
    <source>
        <dbReference type="SAM" id="MobiDB-lite"/>
    </source>
</evidence>
<evidence type="ECO:0000305" key="3"/>
<accession>Q8CNG0</accession>
<proteinExistence type="inferred from homology"/>
<sequence>MAVDNNKAKQAYDNQTGVNEQERKEQQQAQNNQPQFENKLTFSDEVVEKIAGIAAREVKGILDMKGGFTDSFTNAFSNGNNVTTGVSVEVGEKQAAVDLKVILEYGESAPKIFRKVTDLVKEQVKYITGLEVVEVNMQVDDVMTKKEWQQKNEKDNKENNEREGLK</sequence>
<comment type="function">
    <text evidence="1">May play a key role in alkaline pH tolerance.</text>
</comment>
<comment type="similarity">
    <text evidence="3">Belongs to the asp23 family.</text>
</comment>
<organism>
    <name type="scientific">Staphylococcus epidermidis (strain ATCC 12228 / FDA PCI 1200)</name>
    <dbReference type="NCBI Taxonomy" id="176280"/>
    <lineage>
        <taxon>Bacteria</taxon>
        <taxon>Bacillati</taxon>
        <taxon>Bacillota</taxon>
        <taxon>Bacilli</taxon>
        <taxon>Bacillales</taxon>
        <taxon>Staphylococcaceae</taxon>
        <taxon>Staphylococcus</taxon>
    </lineage>
</organism>
<gene>
    <name type="primary">asp23</name>
    <name type="ordered locus">SE_1774</name>
</gene>
<reference key="1">
    <citation type="journal article" date="2003" name="Mol. Microbiol.">
        <title>Genome-based analysis of virulence genes in a non-biofilm-forming Staphylococcus epidermidis strain (ATCC 12228).</title>
        <authorList>
            <person name="Zhang Y.-Q."/>
            <person name="Ren S.-X."/>
            <person name="Li H.-L."/>
            <person name="Wang Y.-X."/>
            <person name="Fu G."/>
            <person name="Yang J."/>
            <person name="Qin Z.-Q."/>
            <person name="Miao Y.-G."/>
            <person name="Wang W.-Y."/>
            <person name="Chen R.-S."/>
            <person name="Shen Y."/>
            <person name="Chen Z."/>
            <person name="Yuan Z.-H."/>
            <person name="Zhao G.-P."/>
            <person name="Qu D."/>
            <person name="Danchin A."/>
            <person name="Wen Y.-M."/>
        </authorList>
    </citation>
    <scope>NUCLEOTIDE SEQUENCE [LARGE SCALE GENOMIC DNA]</scope>
    <source>
        <strain>ATCC 12228 / FDA PCI 1200</strain>
    </source>
</reference>
<protein>
    <recommendedName>
        <fullName>Alkaline shock protein 23</fullName>
    </recommendedName>
</protein>
<dbReference type="EMBL" id="AE015929">
    <property type="protein sequence ID" value="AAO05415.1"/>
    <property type="molecule type" value="Genomic_DNA"/>
</dbReference>
<dbReference type="RefSeq" id="NP_765329.1">
    <property type="nucleotide sequence ID" value="NC_004461.1"/>
</dbReference>
<dbReference type="RefSeq" id="WP_001829780.1">
    <property type="nucleotide sequence ID" value="NZ_WBME01000007.1"/>
</dbReference>
<dbReference type="SMR" id="Q8CNG0"/>
<dbReference type="KEGG" id="sep:SE_1774"/>
<dbReference type="PATRIC" id="fig|176280.10.peg.1731"/>
<dbReference type="eggNOG" id="COG1302">
    <property type="taxonomic scope" value="Bacteria"/>
</dbReference>
<dbReference type="HOGENOM" id="CLU_113198_1_1_9"/>
<dbReference type="OrthoDB" id="9808942at2"/>
<dbReference type="Proteomes" id="UP000001411">
    <property type="component" value="Chromosome"/>
</dbReference>
<dbReference type="InterPro" id="IPR005531">
    <property type="entry name" value="Asp23"/>
</dbReference>
<dbReference type="PANTHER" id="PTHR34297:SF3">
    <property type="entry name" value="ALKALINE SHOCK PROTEIN 23"/>
    <property type="match status" value="1"/>
</dbReference>
<dbReference type="PANTHER" id="PTHR34297">
    <property type="entry name" value="HYPOTHETICAL CYTOSOLIC PROTEIN-RELATED"/>
    <property type="match status" value="1"/>
</dbReference>
<dbReference type="Pfam" id="PF03780">
    <property type="entry name" value="Asp23"/>
    <property type="match status" value="1"/>
</dbReference>
<feature type="chain" id="PRO_0000170483" description="Alkaline shock protein 23">
    <location>
        <begin position="1"/>
        <end position="166"/>
    </location>
</feature>
<feature type="region of interest" description="Disordered" evidence="2">
    <location>
        <begin position="1"/>
        <end position="40"/>
    </location>
</feature>
<feature type="region of interest" description="Disordered" evidence="2">
    <location>
        <begin position="144"/>
        <end position="166"/>
    </location>
</feature>
<feature type="compositionally biased region" description="Low complexity" evidence="2">
    <location>
        <begin position="27"/>
        <end position="38"/>
    </location>
</feature>
<name>ASP23_STAES</name>